<comment type="subcellular location">
    <subcellularLocation>
        <location evidence="1">Cell inner membrane</location>
        <topology evidence="1">Multi-pass membrane protein</topology>
    </subcellularLocation>
</comment>
<comment type="similarity">
    <text evidence="1">Belongs to the UPF0060 family.</text>
</comment>
<name>Y3275_PSEAE</name>
<evidence type="ECO:0000255" key="1">
    <source>
        <dbReference type="HAMAP-Rule" id="MF_00010"/>
    </source>
</evidence>
<keyword id="KW-0997">Cell inner membrane</keyword>
<keyword id="KW-1003">Cell membrane</keyword>
<keyword id="KW-0472">Membrane</keyword>
<keyword id="KW-1185">Reference proteome</keyword>
<keyword id="KW-0812">Transmembrane</keyword>
<keyword id="KW-1133">Transmembrane helix</keyword>
<organism>
    <name type="scientific">Pseudomonas aeruginosa (strain ATCC 15692 / DSM 22644 / CIP 104116 / JCM 14847 / LMG 12228 / 1C / PRS 101 / PAO1)</name>
    <dbReference type="NCBI Taxonomy" id="208964"/>
    <lineage>
        <taxon>Bacteria</taxon>
        <taxon>Pseudomonadati</taxon>
        <taxon>Pseudomonadota</taxon>
        <taxon>Gammaproteobacteria</taxon>
        <taxon>Pseudomonadales</taxon>
        <taxon>Pseudomonadaceae</taxon>
        <taxon>Pseudomonas</taxon>
    </lineage>
</organism>
<feature type="chain" id="PRO_0000162337" description="UPF0060 membrane protein PA3275">
    <location>
        <begin position="1"/>
        <end position="109"/>
    </location>
</feature>
<feature type="transmembrane region" description="Helical" evidence="1">
    <location>
        <begin position="5"/>
        <end position="25"/>
    </location>
</feature>
<feature type="transmembrane region" description="Helical" evidence="1">
    <location>
        <begin position="27"/>
        <end position="47"/>
    </location>
</feature>
<feature type="transmembrane region" description="Helical" evidence="1">
    <location>
        <begin position="59"/>
        <end position="79"/>
    </location>
</feature>
<feature type="transmembrane region" description="Helical" evidence="1">
    <location>
        <begin position="84"/>
        <end position="104"/>
    </location>
</feature>
<accession>Q9HYW6</accession>
<dbReference type="EMBL" id="AE004091">
    <property type="protein sequence ID" value="AAG06663.1"/>
    <property type="molecule type" value="Genomic_DNA"/>
</dbReference>
<dbReference type="PIR" id="B83235">
    <property type="entry name" value="B83235"/>
</dbReference>
<dbReference type="RefSeq" id="NP_251965.1">
    <property type="nucleotide sequence ID" value="NC_002516.2"/>
</dbReference>
<dbReference type="RefSeq" id="WP_003111657.1">
    <property type="nucleotide sequence ID" value="NZ_QZGE01000019.1"/>
</dbReference>
<dbReference type="FunCoup" id="Q9HYW6">
    <property type="interactions" value="103"/>
</dbReference>
<dbReference type="STRING" id="208964.PA3275"/>
<dbReference type="PaxDb" id="208964-PA3275"/>
<dbReference type="DNASU" id="882438"/>
<dbReference type="GeneID" id="882438"/>
<dbReference type="KEGG" id="pae:PA3275"/>
<dbReference type="PATRIC" id="fig|208964.12.peg.3424"/>
<dbReference type="PseudoCAP" id="PA3275"/>
<dbReference type="HOGENOM" id="CLU_117653_1_0_6"/>
<dbReference type="InParanoid" id="Q9HYW6"/>
<dbReference type="OrthoDB" id="123240at2"/>
<dbReference type="PhylomeDB" id="Q9HYW6"/>
<dbReference type="BioCyc" id="PAER208964:G1FZ6-3336-MONOMER"/>
<dbReference type="Proteomes" id="UP000002438">
    <property type="component" value="Chromosome"/>
</dbReference>
<dbReference type="GO" id="GO:0005886">
    <property type="term" value="C:plasma membrane"/>
    <property type="evidence" value="ECO:0000318"/>
    <property type="project" value="GO_Central"/>
</dbReference>
<dbReference type="HAMAP" id="MF_00010">
    <property type="entry name" value="UPF0060"/>
    <property type="match status" value="1"/>
</dbReference>
<dbReference type="InterPro" id="IPR003844">
    <property type="entry name" value="UPF0060"/>
</dbReference>
<dbReference type="NCBIfam" id="NF002586">
    <property type="entry name" value="PRK02237.1"/>
    <property type="match status" value="1"/>
</dbReference>
<dbReference type="PANTHER" id="PTHR36116">
    <property type="entry name" value="UPF0060 MEMBRANE PROTEIN YNFA"/>
    <property type="match status" value="1"/>
</dbReference>
<dbReference type="PANTHER" id="PTHR36116:SF1">
    <property type="entry name" value="UPF0060 MEMBRANE PROTEIN YNFA"/>
    <property type="match status" value="1"/>
</dbReference>
<dbReference type="Pfam" id="PF02694">
    <property type="entry name" value="UPF0060"/>
    <property type="match status" value="1"/>
</dbReference>
<dbReference type="SUPFAM" id="SSF103481">
    <property type="entry name" value="Multidrug resistance efflux transporter EmrE"/>
    <property type="match status" value="1"/>
</dbReference>
<sequence length="109" mass="12140">MINYFWFVLAAFCEIAGCYAFYLWLRLGKSALWVLPGLLSLTLFALLLTRVEASYAGRAYAAYGGIYVAASLFWLAFVERSRPLWSDWLGVALCVVGASVVLFGPRLSQ</sequence>
<proteinExistence type="inferred from homology"/>
<reference key="1">
    <citation type="journal article" date="2000" name="Nature">
        <title>Complete genome sequence of Pseudomonas aeruginosa PAO1, an opportunistic pathogen.</title>
        <authorList>
            <person name="Stover C.K."/>
            <person name="Pham X.-Q.T."/>
            <person name="Erwin A.L."/>
            <person name="Mizoguchi S.D."/>
            <person name="Warrener P."/>
            <person name="Hickey M.J."/>
            <person name="Brinkman F.S.L."/>
            <person name="Hufnagle W.O."/>
            <person name="Kowalik D.J."/>
            <person name="Lagrou M."/>
            <person name="Garber R.L."/>
            <person name="Goltry L."/>
            <person name="Tolentino E."/>
            <person name="Westbrock-Wadman S."/>
            <person name="Yuan Y."/>
            <person name="Brody L.L."/>
            <person name="Coulter S.N."/>
            <person name="Folger K.R."/>
            <person name="Kas A."/>
            <person name="Larbig K."/>
            <person name="Lim R.M."/>
            <person name="Smith K.A."/>
            <person name="Spencer D.H."/>
            <person name="Wong G.K.-S."/>
            <person name="Wu Z."/>
            <person name="Paulsen I.T."/>
            <person name="Reizer J."/>
            <person name="Saier M.H. Jr."/>
            <person name="Hancock R.E.W."/>
            <person name="Lory S."/>
            <person name="Olson M.V."/>
        </authorList>
    </citation>
    <scope>NUCLEOTIDE SEQUENCE [LARGE SCALE GENOMIC DNA]</scope>
    <source>
        <strain>ATCC 15692 / DSM 22644 / CIP 104116 / JCM 14847 / LMG 12228 / 1C / PRS 101 / PAO1</strain>
    </source>
</reference>
<protein>
    <recommendedName>
        <fullName evidence="1">UPF0060 membrane protein PA3275</fullName>
    </recommendedName>
</protein>
<gene>
    <name type="ordered locus">PA3275</name>
</gene>